<sequence>MELLNGTGLWPMAIFTVIFILLVDLMHRHQRWTSRYPPGPVPWPVLGNLLQVDPSNMPYSMYKLQHRYGDVFSLQMGWKPMVIVNRLKAVQEVLVTHGEDTADRPPVPIFKCLGVKPRSQGVVFASYGPEWREQRRFSVSTLRTFGMGKKSLEEWVTKEAGHLCDAFTAQNGRSINPKAMLNKALCNVIASLIFARRFEYEDPYLIRMLTLVEESLIEVSGFIPEVLNTFPALLRIPGLADKVFQGQKTFMAFLDNLLAENRTTWDPAQPPRNLTDAFLAEVEKAKGNPESSFNDENLRMVVVDLFTAGMVTTATTLTWALLLMILYPDVQRRVQQEIDEVIGQVRCPEMTDQAHMPYTNAVIHEVQRFGDIAPLNLPRITSCDIEVQDFVIPKGTTLIINLSSVLKDETVWEKPLRFHPEHFLDAQGNFVKHEAFMPFSAGRRACLGEPLARMELFLFFTCLLQHFSFSVPAGQPRPSTLGNFAISVAPLPYQLCAAVREQGH</sequence>
<proteinExistence type="evidence at protein level"/>
<reference key="1">
    <citation type="journal article" date="1989" name="Biochemistry">
        <title>The CYP2D gene subfamily: analysis of the molecular basis of the debrisoquine 4-hydroxylase deficiency in DA rats.</title>
        <authorList>
            <person name="Matsunaga E."/>
            <person name="Zanger U.M."/>
            <person name="Hardwick J.P."/>
            <person name="Gelboin H.V."/>
            <person name="Meyer U.A."/>
            <person name="Gonzalez F.J."/>
        </authorList>
    </citation>
    <scope>NUCLEOTIDE SEQUENCE [MRNA]</scope>
</reference>
<reference key="2">
    <citation type="journal article" date="1989" name="Nucleic Acids Res.">
        <title>Cytochrome P450CMF cDNA: nucleotide sequence of P450CMF1b.</title>
        <authorList>
            <person name="Ishida N."/>
            <person name="Inuzuka C."/>
            <person name="Tawaragi Y."/>
            <person name="Sugita O."/>
            <person name="Nakazato H."/>
            <person name="Noguchi T."/>
            <person name="Sassa S."/>
            <person name="Kappas A."/>
        </authorList>
    </citation>
    <scope>NUCLEOTIDE SEQUENCE [MRNA]</scope>
</reference>
<reference key="3">
    <citation type="journal article" date="1990" name="J. Mol. Evol.">
        <title>The rat P450 IID subfamily: complete sequences of four closely linked genes and evidence that gene conversions maintained sequence homogeneity at the heme-binding region of the cytochrome P450 active site.</title>
        <authorList>
            <person name="Matsunaga E."/>
            <person name="Umeno M."/>
            <person name="Gonzalez F.J."/>
        </authorList>
    </citation>
    <scope>NUCLEOTIDE SEQUENCE [GENOMIC DNA]</scope>
    <source>
        <strain>Sprague-Dawley</strain>
        <tissue>Liver</tissue>
    </source>
</reference>
<reference key="4">
    <citation type="journal article" date="1988" name="Biochem. Biophys. Res. Commun.">
        <title>Four species of cDNAs for cytochrome P450 isozymes immunorelated to P450C-M/F encode for members of P450IID subfamily, increasing the number of members within the subfamily.</title>
        <authorList>
            <person name="Ishida N."/>
            <person name="Tawaragi Y."/>
            <person name="Inuzuka C."/>
            <person name="Sugita O."/>
            <person name="Kubota I."/>
            <person name="Nakazato H."/>
            <person name="Noguchi T."/>
            <person name="Sassa S."/>
        </authorList>
    </citation>
    <scope>NUCLEOTIDE SEQUENCE [MRNA] OF 18-504</scope>
</reference>
<reference key="5">
    <citation type="journal article" date="2013" name="PLoS ONE">
        <title>Discovery and confirmation of O-GlcNAcylated proteins in rat liver mitochondria by combination of mass spectrometry and immunological methods.</title>
        <authorList>
            <person name="Cao W."/>
            <person name="Cao J."/>
            <person name="Huang J."/>
            <person name="Yao J."/>
            <person name="Yan G."/>
            <person name="Xu H."/>
            <person name="Yang P."/>
        </authorList>
    </citation>
    <scope>GLYCOSYLATION AT SER-382</scope>
</reference>
<gene>
    <name type="primary">Cyp2d10</name>
    <name type="synonym">Cyp2d-10</name>
    <name type="synonym">Cyp2d5</name>
</gene>
<accession>P12939</accession>
<comment type="function">
    <text>Cytochromes P450 are a group of heme-thiolate monooxygenases. In liver microsomes, this enzyme is involved in an NADPH-dependent electron transport pathway. It oxidizes a variety of structurally unrelated compounds, including steroids, fatty acids, and xenobiotics.</text>
</comment>
<comment type="catalytic activity">
    <reaction>
        <text>an organic molecule + reduced [NADPH--hemoprotein reductase] + O2 = an alcohol + oxidized [NADPH--hemoprotein reductase] + H2O + H(+)</text>
        <dbReference type="Rhea" id="RHEA:17149"/>
        <dbReference type="Rhea" id="RHEA-COMP:11964"/>
        <dbReference type="Rhea" id="RHEA-COMP:11965"/>
        <dbReference type="ChEBI" id="CHEBI:15377"/>
        <dbReference type="ChEBI" id="CHEBI:15378"/>
        <dbReference type="ChEBI" id="CHEBI:15379"/>
        <dbReference type="ChEBI" id="CHEBI:30879"/>
        <dbReference type="ChEBI" id="CHEBI:57618"/>
        <dbReference type="ChEBI" id="CHEBI:58210"/>
        <dbReference type="ChEBI" id="CHEBI:142491"/>
        <dbReference type="EC" id="1.14.14.1"/>
    </reaction>
</comment>
<comment type="cofactor">
    <cofactor evidence="1">
        <name>heme</name>
        <dbReference type="ChEBI" id="CHEBI:30413"/>
    </cofactor>
</comment>
<comment type="subcellular location">
    <subcellularLocation>
        <location>Endoplasmic reticulum membrane</location>
        <topology>Peripheral membrane protein</topology>
    </subcellularLocation>
    <subcellularLocation>
        <location>Microsome membrane</location>
        <topology>Peripheral membrane protein</topology>
    </subcellularLocation>
</comment>
<comment type="induction">
    <text>P450 can be induced to high levels in liver and other tissues by various foreign compounds, including drugs, pesticides, and carcinogens.</text>
</comment>
<comment type="similarity">
    <text evidence="3">Belongs to the cytochrome P450 family.</text>
</comment>
<dbReference type="EC" id="1.14.14.1"/>
<dbReference type="EMBL" id="J02869">
    <property type="protein sequence ID" value="AAA41003.1"/>
    <property type="molecule type" value="mRNA"/>
</dbReference>
<dbReference type="EMBL" id="M25143">
    <property type="protein sequence ID" value="AAA41034.1"/>
    <property type="molecule type" value="mRNA"/>
</dbReference>
<dbReference type="EMBL" id="X52030">
    <property type="protein sequence ID" value="CAA36272.1"/>
    <property type="molecule type" value="Genomic_DNA"/>
</dbReference>
<dbReference type="EMBL" id="M22329">
    <property type="protein sequence ID" value="AAA41045.1"/>
    <property type="molecule type" value="mRNA"/>
</dbReference>
<dbReference type="PIR" id="S09611">
    <property type="entry name" value="O4RTD5"/>
</dbReference>
<dbReference type="RefSeq" id="NP_775426.1">
    <property type="nucleotide sequence ID" value="NM_173304.2"/>
</dbReference>
<dbReference type="SMR" id="P12939"/>
<dbReference type="FunCoup" id="P12939">
    <property type="interactions" value="64"/>
</dbReference>
<dbReference type="IntAct" id="P12939">
    <property type="interactions" value="1"/>
</dbReference>
<dbReference type="STRING" id="10116.ENSRNOP00000040266"/>
<dbReference type="GlyCosmos" id="P12939">
    <property type="glycosylation" value="1 site, No reported glycans"/>
</dbReference>
<dbReference type="GlyGen" id="P12939">
    <property type="glycosylation" value="1 site, 1 O-linked glycan (1 site)"/>
</dbReference>
<dbReference type="iPTMnet" id="P12939"/>
<dbReference type="PhosphoSitePlus" id="P12939"/>
<dbReference type="PaxDb" id="10116-ENSRNOP00000040266"/>
<dbReference type="GeneID" id="286963"/>
<dbReference type="KEGG" id="rno:286963"/>
<dbReference type="UCSC" id="RGD:628630">
    <property type="organism name" value="rat"/>
</dbReference>
<dbReference type="AGR" id="RGD:628630"/>
<dbReference type="CTD" id="286963"/>
<dbReference type="RGD" id="628630">
    <property type="gene designation" value="Cyp2d5"/>
</dbReference>
<dbReference type="eggNOG" id="KOG0156">
    <property type="taxonomic scope" value="Eukaryota"/>
</dbReference>
<dbReference type="InParanoid" id="P12939"/>
<dbReference type="OrthoDB" id="47901at9989"/>
<dbReference type="PhylomeDB" id="P12939"/>
<dbReference type="PRO" id="PR:P12939"/>
<dbReference type="Proteomes" id="UP000002494">
    <property type="component" value="Unplaced"/>
</dbReference>
<dbReference type="GO" id="GO:0005737">
    <property type="term" value="C:cytoplasm"/>
    <property type="evidence" value="ECO:0000318"/>
    <property type="project" value="GO_Central"/>
</dbReference>
<dbReference type="GO" id="GO:0005789">
    <property type="term" value="C:endoplasmic reticulum membrane"/>
    <property type="evidence" value="ECO:0007669"/>
    <property type="project" value="UniProtKB-SubCell"/>
</dbReference>
<dbReference type="GO" id="GO:0043231">
    <property type="term" value="C:intracellular membrane-bounded organelle"/>
    <property type="evidence" value="ECO:0000318"/>
    <property type="project" value="GO_Central"/>
</dbReference>
<dbReference type="GO" id="GO:0020037">
    <property type="term" value="F:heme binding"/>
    <property type="evidence" value="ECO:0000318"/>
    <property type="project" value="GO_Central"/>
</dbReference>
<dbReference type="GO" id="GO:0005506">
    <property type="term" value="F:iron ion binding"/>
    <property type="evidence" value="ECO:0007669"/>
    <property type="project" value="InterPro"/>
</dbReference>
<dbReference type="GO" id="GO:0004497">
    <property type="term" value="F:monooxygenase activity"/>
    <property type="evidence" value="ECO:0000304"/>
    <property type="project" value="RGD"/>
</dbReference>
<dbReference type="GO" id="GO:0016712">
    <property type="term" value="F:oxidoreductase activity, acting on paired donors, with incorporation or reduction of molecular oxygen, reduced flavin or flavoprotein as one donor, and incorporation of one atom of oxygen"/>
    <property type="evidence" value="ECO:0000318"/>
    <property type="project" value="GO_Central"/>
</dbReference>
<dbReference type="GO" id="GO:0019369">
    <property type="term" value="P:arachidonate metabolic process"/>
    <property type="evidence" value="ECO:0000318"/>
    <property type="project" value="GO_Central"/>
</dbReference>
<dbReference type="GO" id="GO:0006805">
    <property type="term" value="P:xenobiotic metabolic process"/>
    <property type="evidence" value="ECO:0000318"/>
    <property type="project" value="GO_Central"/>
</dbReference>
<dbReference type="CDD" id="cd20663">
    <property type="entry name" value="CYP2D"/>
    <property type="match status" value="1"/>
</dbReference>
<dbReference type="FunFam" id="1.10.630.10:FF:000004">
    <property type="entry name" value="cytochrome P450 2D15 isoform X1"/>
    <property type="match status" value="1"/>
</dbReference>
<dbReference type="Gene3D" id="1.10.630.10">
    <property type="entry name" value="Cytochrome P450"/>
    <property type="match status" value="1"/>
</dbReference>
<dbReference type="InterPro" id="IPR001128">
    <property type="entry name" value="Cyt_P450"/>
</dbReference>
<dbReference type="InterPro" id="IPR017972">
    <property type="entry name" value="Cyt_P450_CS"/>
</dbReference>
<dbReference type="InterPro" id="IPR002401">
    <property type="entry name" value="Cyt_P450_E_grp-I"/>
</dbReference>
<dbReference type="InterPro" id="IPR008069">
    <property type="entry name" value="Cyt_P450_E_grp-I_CYP2D-like"/>
</dbReference>
<dbReference type="InterPro" id="IPR036396">
    <property type="entry name" value="Cyt_P450_sf"/>
</dbReference>
<dbReference type="InterPro" id="IPR050182">
    <property type="entry name" value="Cytochrome_P450_fam2"/>
</dbReference>
<dbReference type="PANTHER" id="PTHR24300">
    <property type="entry name" value="CYTOCHROME P450 508A4-RELATED"/>
    <property type="match status" value="1"/>
</dbReference>
<dbReference type="PANTHER" id="PTHR24300:SF119">
    <property type="entry name" value="CYTOCHROME P450-RELATED"/>
    <property type="match status" value="1"/>
</dbReference>
<dbReference type="Pfam" id="PF00067">
    <property type="entry name" value="p450"/>
    <property type="match status" value="1"/>
</dbReference>
<dbReference type="PRINTS" id="PR00463">
    <property type="entry name" value="EP450I"/>
</dbReference>
<dbReference type="PRINTS" id="PR01686">
    <property type="entry name" value="EP450ICYP2D"/>
</dbReference>
<dbReference type="PRINTS" id="PR00385">
    <property type="entry name" value="P450"/>
</dbReference>
<dbReference type="SUPFAM" id="SSF48264">
    <property type="entry name" value="Cytochrome P450"/>
    <property type="match status" value="1"/>
</dbReference>
<dbReference type="PROSITE" id="PS00086">
    <property type="entry name" value="CYTOCHROME_P450"/>
    <property type="match status" value="1"/>
</dbReference>
<keyword id="KW-0256">Endoplasmic reticulum</keyword>
<keyword id="KW-0325">Glycoprotein</keyword>
<keyword id="KW-0349">Heme</keyword>
<keyword id="KW-0408">Iron</keyword>
<keyword id="KW-0472">Membrane</keyword>
<keyword id="KW-0479">Metal-binding</keyword>
<keyword id="KW-0492">Microsome</keyword>
<keyword id="KW-0503">Monooxygenase</keyword>
<keyword id="KW-0560">Oxidoreductase</keyword>
<keyword id="KW-1185">Reference proteome</keyword>
<feature type="chain" id="PRO_0000051736" description="Cytochrome P450 2D10">
    <location>
        <begin position="1"/>
        <end position="504"/>
    </location>
</feature>
<feature type="binding site" description="axial binding residue">
    <location>
        <position position="446"/>
    </location>
    <ligand>
        <name>heme</name>
        <dbReference type="ChEBI" id="CHEBI:30413"/>
    </ligand>
    <ligandPart>
        <name>Fe</name>
        <dbReference type="ChEBI" id="CHEBI:18248"/>
    </ligandPart>
</feature>
<feature type="glycosylation site" description="O-linked (GlcNAc) serine" evidence="2">
    <location>
        <position position="382"/>
    </location>
</feature>
<name>CP2DA_RAT</name>
<evidence type="ECO:0000250" key="1"/>
<evidence type="ECO:0000269" key="2">
    <source>
    </source>
</evidence>
<evidence type="ECO:0000305" key="3"/>
<protein>
    <recommendedName>
        <fullName>Cytochrome P450 2D10</fullName>
        <ecNumber>1.14.14.1</ecNumber>
    </recommendedName>
    <alternativeName>
        <fullName>CYPIID10</fullName>
    </alternativeName>
    <alternativeName>
        <fullName>Cytochrome P450-CMF1B</fullName>
    </alternativeName>
    <alternativeName>
        <fullName>Cytochrome P450-DB5</fullName>
    </alternativeName>
    <alternativeName>
        <fullName>Debrisoquine 4-hydroxylase</fullName>
    </alternativeName>
</protein>
<organism>
    <name type="scientific">Rattus norvegicus</name>
    <name type="common">Rat</name>
    <dbReference type="NCBI Taxonomy" id="10116"/>
    <lineage>
        <taxon>Eukaryota</taxon>
        <taxon>Metazoa</taxon>
        <taxon>Chordata</taxon>
        <taxon>Craniata</taxon>
        <taxon>Vertebrata</taxon>
        <taxon>Euteleostomi</taxon>
        <taxon>Mammalia</taxon>
        <taxon>Eutheria</taxon>
        <taxon>Euarchontoglires</taxon>
        <taxon>Glires</taxon>
        <taxon>Rodentia</taxon>
        <taxon>Myomorpha</taxon>
        <taxon>Muroidea</taxon>
        <taxon>Muridae</taxon>
        <taxon>Murinae</taxon>
        <taxon>Rattus</taxon>
    </lineage>
</organism>